<name>OBG_IDILO</name>
<organism>
    <name type="scientific">Idiomarina loihiensis (strain ATCC BAA-735 / DSM 15497 / L2-TR)</name>
    <dbReference type="NCBI Taxonomy" id="283942"/>
    <lineage>
        <taxon>Bacteria</taxon>
        <taxon>Pseudomonadati</taxon>
        <taxon>Pseudomonadota</taxon>
        <taxon>Gammaproteobacteria</taxon>
        <taxon>Alteromonadales</taxon>
        <taxon>Idiomarinaceae</taxon>
        <taxon>Idiomarina</taxon>
    </lineage>
</organism>
<comment type="function">
    <text evidence="1">An essential GTPase which binds GTP, GDP and possibly (p)ppGpp with moderate affinity, with high nucleotide exchange rates and a fairly low GTP hydrolysis rate. Plays a role in control of the cell cycle, stress response, ribosome biogenesis and in those bacteria that undergo differentiation, in morphogenesis control.</text>
</comment>
<comment type="cofactor">
    <cofactor evidence="1">
        <name>Mg(2+)</name>
        <dbReference type="ChEBI" id="CHEBI:18420"/>
    </cofactor>
</comment>
<comment type="subunit">
    <text evidence="1">Monomer.</text>
</comment>
<comment type="subcellular location">
    <subcellularLocation>
        <location evidence="1">Cytoplasm</location>
    </subcellularLocation>
</comment>
<comment type="similarity">
    <text evidence="1">Belongs to the TRAFAC class OBG-HflX-like GTPase superfamily. OBG GTPase family.</text>
</comment>
<sequence>MKFVDEVEIRVDAGDGGNGCISFRREKYIPKGGPDGGDGGDGGDVYLEADENLNTLIDYRFERFHKAERGKNGMGKNCTGRRGNDIVLPVPPGTRATDIDTGEVLGDLTKHGQRLMVAKGGFHGLGNTRFKSSINRAPRQKTDGTPGEVRPLKLELMLLADVGLLGMPNAGKSTFIRSVSAARPKVADYPFTTLIPNLGVVRPAPHQSFVIADIPGLIEGAAEGAGLGIQFLKHLERCRLLLHLVDLAPFDETDPAEQARIIINELEKYSPKLAEKPRWLVINKVDLLLDEEVQEKVDELVKSLNWDGPVFQIAALEGRGSDALCREVMSYLETLPAPDTEQHEEADPVEFMWDTYHEEVLEEEMDDEDDDDDDDHDVEVIYQK</sequence>
<feature type="chain" id="PRO_0000385982" description="GTPase Obg">
    <location>
        <begin position="1"/>
        <end position="384"/>
    </location>
</feature>
<feature type="domain" description="Obg" evidence="2">
    <location>
        <begin position="1"/>
        <end position="159"/>
    </location>
</feature>
<feature type="domain" description="OBG-type G" evidence="1">
    <location>
        <begin position="160"/>
        <end position="333"/>
    </location>
</feature>
<feature type="region of interest" description="Disordered" evidence="3">
    <location>
        <begin position="72"/>
        <end position="94"/>
    </location>
</feature>
<feature type="region of interest" description="Disordered" evidence="3">
    <location>
        <begin position="358"/>
        <end position="384"/>
    </location>
</feature>
<feature type="compositionally biased region" description="Acidic residues" evidence="3">
    <location>
        <begin position="360"/>
        <end position="377"/>
    </location>
</feature>
<feature type="binding site" evidence="1">
    <location>
        <begin position="166"/>
        <end position="173"/>
    </location>
    <ligand>
        <name>GTP</name>
        <dbReference type="ChEBI" id="CHEBI:37565"/>
    </ligand>
</feature>
<feature type="binding site" evidence="1">
    <location>
        <position position="173"/>
    </location>
    <ligand>
        <name>Mg(2+)</name>
        <dbReference type="ChEBI" id="CHEBI:18420"/>
    </ligand>
</feature>
<feature type="binding site" evidence="1">
    <location>
        <begin position="191"/>
        <end position="195"/>
    </location>
    <ligand>
        <name>GTP</name>
        <dbReference type="ChEBI" id="CHEBI:37565"/>
    </ligand>
</feature>
<feature type="binding site" evidence="1">
    <location>
        <position position="193"/>
    </location>
    <ligand>
        <name>Mg(2+)</name>
        <dbReference type="ChEBI" id="CHEBI:18420"/>
    </ligand>
</feature>
<feature type="binding site" evidence="1">
    <location>
        <begin position="213"/>
        <end position="216"/>
    </location>
    <ligand>
        <name>GTP</name>
        <dbReference type="ChEBI" id="CHEBI:37565"/>
    </ligand>
</feature>
<feature type="binding site" evidence="1">
    <location>
        <begin position="283"/>
        <end position="286"/>
    </location>
    <ligand>
        <name>GTP</name>
        <dbReference type="ChEBI" id="CHEBI:37565"/>
    </ligand>
</feature>
<feature type="binding site" evidence="1">
    <location>
        <begin position="314"/>
        <end position="316"/>
    </location>
    <ligand>
        <name>GTP</name>
        <dbReference type="ChEBI" id="CHEBI:37565"/>
    </ligand>
</feature>
<proteinExistence type="inferred from homology"/>
<evidence type="ECO:0000255" key="1">
    <source>
        <dbReference type="HAMAP-Rule" id="MF_01454"/>
    </source>
</evidence>
<evidence type="ECO:0000255" key="2">
    <source>
        <dbReference type="PROSITE-ProRule" id="PRU01231"/>
    </source>
</evidence>
<evidence type="ECO:0000256" key="3">
    <source>
        <dbReference type="SAM" id="MobiDB-lite"/>
    </source>
</evidence>
<keyword id="KW-0963">Cytoplasm</keyword>
<keyword id="KW-0342">GTP-binding</keyword>
<keyword id="KW-0378">Hydrolase</keyword>
<keyword id="KW-0460">Magnesium</keyword>
<keyword id="KW-0479">Metal-binding</keyword>
<keyword id="KW-0547">Nucleotide-binding</keyword>
<keyword id="KW-1185">Reference proteome</keyword>
<dbReference type="EC" id="3.6.5.-" evidence="1"/>
<dbReference type="EMBL" id="AE017340">
    <property type="protein sequence ID" value="AAV81320.1"/>
    <property type="molecule type" value="Genomic_DNA"/>
</dbReference>
<dbReference type="RefSeq" id="WP_011233738.1">
    <property type="nucleotide sequence ID" value="NC_006512.1"/>
</dbReference>
<dbReference type="SMR" id="Q5R039"/>
<dbReference type="STRING" id="283942.IL0477"/>
<dbReference type="GeneID" id="41335628"/>
<dbReference type="KEGG" id="ilo:IL0477"/>
<dbReference type="eggNOG" id="COG0536">
    <property type="taxonomic scope" value="Bacteria"/>
</dbReference>
<dbReference type="HOGENOM" id="CLU_011747_2_0_6"/>
<dbReference type="OrthoDB" id="9807318at2"/>
<dbReference type="Proteomes" id="UP000001171">
    <property type="component" value="Chromosome"/>
</dbReference>
<dbReference type="GO" id="GO:0005737">
    <property type="term" value="C:cytoplasm"/>
    <property type="evidence" value="ECO:0007669"/>
    <property type="project" value="UniProtKB-SubCell"/>
</dbReference>
<dbReference type="GO" id="GO:0005525">
    <property type="term" value="F:GTP binding"/>
    <property type="evidence" value="ECO:0007669"/>
    <property type="project" value="UniProtKB-UniRule"/>
</dbReference>
<dbReference type="GO" id="GO:0003924">
    <property type="term" value="F:GTPase activity"/>
    <property type="evidence" value="ECO:0007669"/>
    <property type="project" value="UniProtKB-UniRule"/>
</dbReference>
<dbReference type="GO" id="GO:0000287">
    <property type="term" value="F:magnesium ion binding"/>
    <property type="evidence" value="ECO:0007669"/>
    <property type="project" value="InterPro"/>
</dbReference>
<dbReference type="GO" id="GO:0042254">
    <property type="term" value="P:ribosome biogenesis"/>
    <property type="evidence" value="ECO:0007669"/>
    <property type="project" value="UniProtKB-UniRule"/>
</dbReference>
<dbReference type="CDD" id="cd01898">
    <property type="entry name" value="Obg"/>
    <property type="match status" value="1"/>
</dbReference>
<dbReference type="FunFam" id="2.70.210.12:FF:000001">
    <property type="entry name" value="GTPase Obg"/>
    <property type="match status" value="1"/>
</dbReference>
<dbReference type="Gene3D" id="2.70.210.12">
    <property type="entry name" value="GTP1/OBG domain"/>
    <property type="match status" value="1"/>
</dbReference>
<dbReference type="Gene3D" id="3.40.50.300">
    <property type="entry name" value="P-loop containing nucleotide triphosphate hydrolases"/>
    <property type="match status" value="1"/>
</dbReference>
<dbReference type="HAMAP" id="MF_01454">
    <property type="entry name" value="GTPase_Obg"/>
    <property type="match status" value="1"/>
</dbReference>
<dbReference type="InterPro" id="IPR031167">
    <property type="entry name" value="G_OBG"/>
</dbReference>
<dbReference type="InterPro" id="IPR006073">
    <property type="entry name" value="GTP-bd"/>
</dbReference>
<dbReference type="InterPro" id="IPR014100">
    <property type="entry name" value="GTP-bd_Obg/CgtA"/>
</dbReference>
<dbReference type="InterPro" id="IPR006074">
    <property type="entry name" value="GTP1-OBG_CS"/>
</dbReference>
<dbReference type="InterPro" id="IPR006169">
    <property type="entry name" value="GTP1_OBG_dom"/>
</dbReference>
<dbReference type="InterPro" id="IPR036726">
    <property type="entry name" value="GTP1_OBG_dom_sf"/>
</dbReference>
<dbReference type="InterPro" id="IPR045086">
    <property type="entry name" value="OBG_GTPase"/>
</dbReference>
<dbReference type="InterPro" id="IPR027417">
    <property type="entry name" value="P-loop_NTPase"/>
</dbReference>
<dbReference type="NCBIfam" id="TIGR02729">
    <property type="entry name" value="Obg_CgtA"/>
    <property type="match status" value="1"/>
</dbReference>
<dbReference type="NCBIfam" id="NF008955">
    <property type="entry name" value="PRK12297.1"/>
    <property type="match status" value="1"/>
</dbReference>
<dbReference type="NCBIfam" id="NF008956">
    <property type="entry name" value="PRK12299.1"/>
    <property type="match status" value="1"/>
</dbReference>
<dbReference type="PANTHER" id="PTHR11702">
    <property type="entry name" value="DEVELOPMENTALLY REGULATED GTP-BINDING PROTEIN-RELATED"/>
    <property type="match status" value="1"/>
</dbReference>
<dbReference type="PANTHER" id="PTHR11702:SF31">
    <property type="entry name" value="MITOCHONDRIAL RIBOSOME-ASSOCIATED GTPASE 2"/>
    <property type="match status" value="1"/>
</dbReference>
<dbReference type="Pfam" id="PF01018">
    <property type="entry name" value="GTP1_OBG"/>
    <property type="match status" value="1"/>
</dbReference>
<dbReference type="Pfam" id="PF01926">
    <property type="entry name" value="MMR_HSR1"/>
    <property type="match status" value="1"/>
</dbReference>
<dbReference type="PIRSF" id="PIRSF002401">
    <property type="entry name" value="GTP_bd_Obg/CgtA"/>
    <property type="match status" value="1"/>
</dbReference>
<dbReference type="PRINTS" id="PR00326">
    <property type="entry name" value="GTP1OBG"/>
</dbReference>
<dbReference type="SUPFAM" id="SSF82051">
    <property type="entry name" value="Obg GTP-binding protein N-terminal domain"/>
    <property type="match status" value="1"/>
</dbReference>
<dbReference type="SUPFAM" id="SSF52540">
    <property type="entry name" value="P-loop containing nucleoside triphosphate hydrolases"/>
    <property type="match status" value="1"/>
</dbReference>
<dbReference type="PROSITE" id="PS51710">
    <property type="entry name" value="G_OBG"/>
    <property type="match status" value="1"/>
</dbReference>
<dbReference type="PROSITE" id="PS00905">
    <property type="entry name" value="GTP1_OBG"/>
    <property type="match status" value="1"/>
</dbReference>
<dbReference type="PROSITE" id="PS51883">
    <property type="entry name" value="OBG"/>
    <property type="match status" value="1"/>
</dbReference>
<protein>
    <recommendedName>
        <fullName evidence="1">GTPase Obg</fullName>
        <ecNumber evidence="1">3.6.5.-</ecNumber>
    </recommendedName>
    <alternativeName>
        <fullName evidence="1">GTP-binding protein Obg</fullName>
    </alternativeName>
</protein>
<reference key="1">
    <citation type="journal article" date="2004" name="Proc. Natl. Acad. Sci. U.S.A.">
        <title>Genome sequence of the deep-sea gamma-proteobacterium Idiomarina loihiensis reveals amino acid fermentation as a source of carbon and energy.</title>
        <authorList>
            <person name="Hou S."/>
            <person name="Saw J.H."/>
            <person name="Lee K.S."/>
            <person name="Freitas T.A."/>
            <person name="Belisle C."/>
            <person name="Kawarabayasi Y."/>
            <person name="Donachie S.P."/>
            <person name="Pikina A."/>
            <person name="Galperin M.Y."/>
            <person name="Koonin E.V."/>
            <person name="Makarova K.S."/>
            <person name="Omelchenko M.V."/>
            <person name="Sorokin A."/>
            <person name="Wolf Y.I."/>
            <person name="Li Q.X."/>
            <person name="Keum Y.S."/>
            <person name="Campbell S."/>
            <person name="Denery J."/>
            <person name="Aizawa S."/>
            <person name="Shibata S."/>
            <person name="Malahoff A."/>
            <person name="Alam M."/>
        </authorList>
    </citation>
    <scope>NUCLEOTIDE SEQUENCE [LARGE SCALE GENOMIC DNA]</scope>
    <source>
        <strain>ATCC BAA-735 / DSM 15497 / L2-TR</strain>
    </source>
</reference>
<gene>
    <name evidence="1" type="primary">obg</name>
    <name type="ordered locus">IL0477</name>
</gene>
<accession>Q5R039</accession>